<keyword id="KW-0184">Conjugation</keyword>
<keyword id="KW-0574">Periplasm</keyword>
<keyword id="KW-0614">Plasmid</keyword>
<keyword id="KW-1185">Reference proteome</keyword>
<keyword id="KW-0732">Signal</keyword>
<gene>
    <name type="primary">trbK</name>
    <name type="ordered locus">NGR_a04150</name>
    <name type="ORF">y4dB</name>
</gene>
<proteinExistence type="inferred from homology"/>
<sequence length="65" mass="6864">MSRAVIIALVILVAAVSTTATALIVNSRASNPSAPEEQRTAKEKFFGAGKALPPIKDGQEMGPRW</sequence>
<reference key="1">
    <citation type="journal article" date="1997" name="Nature">
        <title>Molecular basis of symbiosis between Rhizobium and legumes.</title>
        <authorList>
            <person name="Freiberg C.A."/>
            <person name="Fellay R."/>
            <person name="Bairoch A."/>
            <person name="Broughton W.J."/>
            <person name="Rosenthal A."/>
            <person name="Perret X."/>
        </authorList>
    </citation>
    <scope>NUCLEOTIDE SEQUENCE [LARGE SCALE GENOMIC DNA]</scope>
    <source>
        <strain>NBRC 101917 / NGR234</strain>
    </source>
</reference>
<reference key="2">
    <citation type="journal article" date="2009" name="Appl. Environ. Microbiol.">
        <title>Rhizobium sp. strain NGR234 possesses a remarkable number of secretion systems.</title>
        <authorList>
            <person name="Schmeisser C."/>
            <person name="Liesegang H."/>
            <person name="Krysciak D."/>
            <person name="Bakkou N."/>
            <person name="Le Quere A."/>
            <person name="Wollherr A."/>
            <person name="Heinemeyer I."/>
            <person name="Morgenstern B."/>
            <person name="Pommerening-Roeser A."/>
            <person name="Flores M."/>
            <person name="Palacios R."/>
            <person name="Brenner S."/>
            <person name="Gottschalk G."/>
            <person name="Schmitz R.A."/>
            <person name="Broughton W.J."/>
            <person name="Perret X."/>
            <person name="Strittmatter A.W."/>
            <person name="Streit W.R."/>
        </authorList>
    </citation>
    <scope>NUCLEOTIDE SEQUENCE [LARGE SCALE GENOMIC DNA]</scope>
    <source>
        <strain>NBRC 101917 / NGR234</strain>
    </source>
</reference>
<geneLocation type="plasmid">
    <name>sym pNGR234a</name>
</geneLocation>
<feature type="signal peptide" evidence="1">
    <location>
        <begin position="1"/>
        <end position="19"/>
    </location>
</feature>
<feature type="chain" id="PRO_0000022588" description="Probable conjugal transfer protein TrbK">
    <location>
        <begin position="20"/>
        <end position="65"/>
    </location>
</feature>
<organism>
    <name type="scientific">Sinorhizobium fredii (strain NBRC 101917 / NGR234)</name>
    <dbReference type="NCBI Taxonomy" id="394"/>
    <lineage>
        <taxon>Bacteria</taxon>
        <taxon>Pseudomonadati</taxon>
        <taxon>Pseudomonadota</taxon>
        <taxon>Alphaproteobacteria</taxon>
        <taxon>Hyphomicrobiales</taxon>
        <taxon>Rhizobiaceae</taxon>
        <taxon>Sinorhizobium/Ensifer group</taxon>
        <taxon>Sinorhizobium</taxon>
    </lineage>
</organism>
<dbReference type="EMBL" id="U00090">
    <property type="protein sequence ID" value="AAB92434.1"/>
    <property type="molecule type" value="Genomic_DNA"/>
</dbReference>
<dbReference type="RefSeq" id="NP_443811.1">
    <property type="nucleotide sequence ID" value="NC_000914.2"/>
</dbReference>
<dbReference type="RefSeq" id="WP_010875425.1">
    <property type="nucleotide sequence ID" value="NC_000914.2"/>
</dbReference>
<dbReference type="KEGG" id="rhi:NGR_a04150"/>
<dbReference type="PATRIC" id="fig|394.7.peg.436"/>
<dbReference type="eggNOG" id="ENOG5032QQV">
    <property type="taxonomic scope" value="Bacteria"/>
</dbReference>
<dbReference type="HOGENOM" id="CLU_2828215_0_0_5"/>
<dbReference type="OrthoDB" id="8305398at2"/>
<dbReference type="Proteomes" id="UP000001054">
    <property type="component" value="Plasmid pNGR234a"/>
</dbReference>
<dbReference type="GO" id="GO:0042597">
    <property type="term" value="C:periplasmic space"/>
    <property type="evidence" value="ECO:0007669"/>
    <property type="project" value="UniProtKB-SubCell"/>
</dbReference>
<dbReference type="InterPro" id="IPR020065">
    <property type="entry name" value="Conjugal_tfr_protein_TrbK"/>
</dbReference>
<dbReference type="InterPro" id="IPR024475">
    <property type="entry name" value="TrbJ/K_C"/>
</dbReference>
<dbReference type="NCBIfam" id="TIGR04361">
    <property type="entry name" value="TrbK_Ti"/>
    <property type="match status" value="1"/>
</dbReference>
<dbReference type="Pfam" id="PF10907">
    <property type="entry name" value="DUF2749"/>
    <property type="match status" value="1"/>
</dbReference>
<name>TRBK_SINFN</name>
<accession>P55401</accession>
<protein>
    <recommendedName>
        <fullName>Probable conjugal transfer protein TrbK</fullName>
    </recommendedName>
</protein>
<evidence type="ECO:0000255" key="1"/>
<evidence type="ECO:0000305" key="2"/>
<comment type="subcellular location">
    <subcellularLocation>
        <location evidence="2">Periplasm</location>
    </subcellularLocation>
</comment>
<comment type="similarity">
    <text evidence="2">To A.tumefaciens Ti plasmid TrbK.</text>
</comment>